<accession>Q54GH2</accession>
<comment type="function">
    <text evidence="1">Probable transcriptional regulator.</text>
</comment>
<comment type="subcellular location">
    <subcellularLocation>
        <location evidence="1">Nucleus</location>
    </subcellularLocation>
</comment>
<comment type="similarity">
    <text evidence="4">Belongs to the bZIP family.</text>
</comment>
<protein>
    <recommendedName>
        <fullName>Probable basic-leucine zipper transcription factor R</fullName>
    </recommendedName>
</protein>
<organism>
    <name type="scientific">Dictyostelium discoideum</name>
    <name type="common">Social amoeba</name>
    <dbReference type="NCBI Taxonomy" id="44689"/>
    <lineage>
        <taxon>Eukaryota</taxon>
        <taxon>Amoebozoa</taxon>
        <taxon>Evosea</taxon>
        <taxon>Eumycetozoa</taxon>
        <taxon>Dictyostelia</taxon>
        <taxon>Dictyosteliales</taxon>
        <taxon>Dictyosteliaceae</taxon>
        <taxon>Dictyostelium</taxon>
    </lineage>
</organism>
<reference key="1">
    <citation type="journal article" date="2005" name="Nature">
        <title>The genome of the social amoeba Dictyostelium discoideum.</title>
        <authorList>
            <person name="Eichinger L."/>
            <person name="Pachebat J.A."/>
            <person name="Gloeckner G."/>
            <person name="Rajandream M.A."/>
            <person name="Sucgang R."/>
            <person name="Berriman M."/>
            <person name="Song J."/>
            <person name="Olsen R."/>
            <person name="Szafranski K."/>
            <person name="Xu Q."/>
            <person name="Tunggal B."/>
            <person name="Kummerfeld S."/>
            <person name="Madera M."/>
            <person name="Konfortov B.A."/>
            <person name="Rivero F."/>
            <person name="Bankier A.T."/>
            <person name="Lehmann R."/>
            <person name="Hamlin N."/>
            <person name="Davies R."/>
            <person name="Gaudet P."/>
            <person name="Fey P."/>
            <person name="Pilcher K."/>
            <person name="Chen G."/>
            <person name="Saunders D."/>
            <person name="Sodergren E.J."/>
            <person name="Davis P."/>
            <person name="Kerhornou A."/>
            <person name="Nie X."/>
            <person name="Hall N."/>
            <person name="Anjard C."/>
            <person name="Hemphill L."/>
            <person name="Bason N."/>
            <person name="Farbrother P."/>
            <person name="Desany B."/>
            <person name="Just E."/>
            <person name="Morio T."/>
            <person name="Rost R."/>
            <person name="Churcher C.M."/>
            <person name="Cooper J."/>
            <person name="Haydock S."/>
            <person name="van Driessche N."/>
            <person name="Cronin A."/>
            <person name="Goodhead I."/>
            <person name="Muzny D.M."/>
            <person name="Mourier T."/>
            <person name="Pain A."/>
            <person name="Lu M."/>
            <person name="Harper D."/>
            <person name="Lindsay R."/>
            <person name="Hauser H."/>
            <person name="James K.D."/>
            <person name="Quiles M."/>
            <person name="Madan Babu M."/>
            <person name="Saito T."/>
            <person name="Buchrieser C."/>
            <person name="Wardroper A."/>
            <person name="Felder M."/>
            <person name="Thangavelu M."/>
            <person name="Johnson D."/>
            <person name="Knights A."/>
            <person name="Loulseged H."/>
            <person name="Mungall K.L."/>
            <person name="Oliver K."/>
            <person name="Price C."/>
            <person name="Quail M.A."/>
            <person name="Urushihara H."/>
            <person name="Hernandez J."/>
            <person name="Rabbinowitsch E."/>
            <person name="Steffen D."/>
            <person name="Sanders M."/>
            <person name="Ma J."/>
            <person name="Kohara Y."/>
            <person name="Sharp S."/>
            <person name="Simmonds M.N."/>
            <person name="Spiegler S."/>
            <person name="Tivey A."/>
            <person name="Sugano S."/>
            <person name="White B."/>
            <person name="Walker D."/>
            <person name="Woodward J.R."/>
            <person name="Winckler T."/>
            <person name="Tanaka Y."/>
            <person name="Shaulsky G."/>
            <person name="Schleicher M."/>
            <person name="Weinstock G.M."/>
            <person name="Rosenthal A."/>
            <person name="Cox E.C."/>
            <person name="Chisholm R.L."/>
            <person name="Gibbs R.A."/>
            <person name="Loomis W.F."/>
            <person name="Platzer M."/>
            <person name="Kay R.R."/>
            <person name="Williams J.G."/>
            <person name="Dear P.H."/>
            <person name="Noegel A.A."/>
            <person name="Barrell B.G."/>
            <person name="Kuspa A."/>
        </authorList>
    </citation>
    <scope>NUCLEOTIDE SEQUENCE [LARGE SCALE GENOMIC DNA]</scope>
    <source>
        <strain>AX4</strain>
    </source>
</reference>
<reference key="2">
    <citation type="journal article" date="2006" name="Development">
        <title>bZIP transcription factor interactions regulate DIF responses in Dictyostelium.</title>
        <authorList>
            <person name="Huang E."/>
            <person name="Blagg S.L."/>
            <person name="Keller T."/>
            <person name="Katoh M."/>
            <person name="Shaulsky G."/>
            <person name="Thompson C.R.L."/>
        </authorList>
    </citation>
    <scope>IDENTIFICATION</scope>
</reference>
<dbReference type="EMBL" id="AAFI02000158">
    <property type="protein sequence ID" value="EAL62354.1"/>
    <property type="molecule type" value="Genomic_DNA"/>
</dbReference>
<dbReference type="RefSeq" id="XP_635856.1">
    <property type="nucleotide sequence ID" value="XM_630764.1"/>
</dbReference>
<dbReference type="SMR" id="Q54GH2"/>
<dbReference type="FunCoup" id="Q54GH2">
    <property type="interactions" value="399"/>
</dbReference>
<dbReference type="STRING" id="44689.Q54GH2"/>
<dbReference type="GlyGen" id="Q54GH2">
    <property type="glycosylation" value="1 site"/>
</dbReference>
<dbReference type="PaxDb" id="44689-DDB0220092"/>
<dbReference type="EnsemblProtists" id="EAL62354">
    <property type="protein sequence ID" value="EAL62354"/>
    <property type="gene ID" value="DDB_G0290165"/>
</dbReference>
<dbReference type="GeneID" id="8627512"/>
<dbReference type="KEGG" id="ddi:DDB_G0290165"/>
<dbReference type="dictyBase" id="DDB_G0290165">
    <property type="gene designation" value="bzpR"/>
</dbReference>
<dbReference type="VEuPathDB" id="AmoebaDB:DDB_G0290165"/>
<dbReference type="HOGENOM" id="CLU_322745_0_0_1"/>
<dbReference type="InParanoid" id="Q54GH2"/>
<dbReference type="OMA" id="MELEYKC"/>
<dbReference type="PRO" id="PR:Q54GH2"/>
<dbReference type="Proteomes" id="UP000002195">
    <property type="component" value="Chromosome 5"/>
</dbReference>
<dbReference type="GO" id="GO:0005634">
    <property type="term" value="C:nucleus"/>
    <property type="evidence" value="ECO:0000318"/>
    <property type="project" value="GO_Central"/>
</dbReference>
<dbReference type="GO" id="GO:0003700">
    <property type="term" value="F:DNA-binding transcription factor activity"/>
    <property type="evidence" value="ECO:0007669"/>
    <property type="project" value="InterPro"/>
</dbReference>
<dbReference type="GO" id="GO:0043565">
    <property type="term" value="F:sequence-specific DNA binding"/>
    <property type="evidence" value="ECO:0000318"/>
    <property type="project" value="GO_Central"/>
</dbReference>
<dbReference type="GO" id="GO:0010737">
    <property type="term" value="P:protein kinase A signaling"/>
    <property type="evidence" value="ECO:0000270"/>
    <property type="project" value="dictyBase"/>
</dbReference>
<dbReference type="GO" id="GO:0010468">
    <property type="term" value="P:regulation of gene expression"/>
    <property type="evidence" value="ECO:0000318"/>
    <property type="project" value="GO_Central"/>
</dbReference>
<dbReference type="GO" id="GO:0031288">
    <property type="term" value="P:sorocarp morphogenesis"/>
    <property type="evidence" value="ECO:0000315"/>
    <property type="project" value="dictyBase"/>
</dbReference>
<dbReference type="CDD" id="cd14686">
    <property type="entry name" value="bZIP"/>
    <property type="match status" value="1"/>
</dbReference>
<dbReference type="Gene3D" id="1.20.5.170">
    <property type="match status" value="1"/>
</dbReference>
<dbReference type="InterPro" id="IPR004827">
    <property type="entry name" value="bZIP"/>
</dbReference>
<dbReference type="InterPro" id="IPR046347">
    <property type="entry name" value="bZIP_sf"/>
</dbReference>
<dbReference type="PANTHER" id="PTHR14312">
    <property type="entry name" value="CREB/ATF BZIP TRANSCRIPTION FACTOR"/>
    <property type="match status" value="1"/>
</dbReference>
<dbReference type="PANTHER" id="PTHR14312:SF2">
    <property type="entry name" value="GLYCOSYLTRANSFERASE-RELATED"/>
    <property type="match status" value="1"/>
</dbReference>
<dbReference type="SMART" id="SM00338">
    <property type="entry name" value="BRLZ"/>
    <property type="match status" value="1"/>
</dbReference>
<dbReference type="SUPFAM" id="SSF57959">
    <property type="entry name" value="Leucine zipper domain"/>
    <property type="match status" value="1"/>
</dbReference>
<evidence type="ECO:0000250" key="1"/>
<evidence type="ECO:0000255" key="2"/>
<evidence type="ECO:0000256" key="3">
    <source>
        <dbReference type="SAM" id="MobiDB-lite"/>
    </source>
</evidence>
<evidence type="ECO:0000305" key="4"/>
<feature type="chain" id="PRO_0000383606" description="Probable basic-leucine zipper transcription factor R">
    <location>
        <begin position="1"/>
        <end position="897"/>
    </location>
</feature>
<feature type="domain" description="bZIP">
    <location>
        <begin position="557"/>
        <end position="620"/>
    </location>
</feature>
<feature type="region of interest" description="Disordered" evidence="3">
    <location>
        <begin position="38"/>
        <end position="88"/>
    </location>
</feature>
<feature type="region of interest" description="Disordered" evidence="3">
    <location>
        <begin position="128"/>
        <end position="198"/>
    </location>
</feature>
<feature type="region of interest" description="Disordered" evidence="3">
    <location>
        <begin position="461"/>
        <end position="516"/>
    </location>
</feature>
<feature type="region of interest" description="Basic motif" evidence="1">
    <location>
        <begin position="559"/>
        <end position="564"/>
    </location>
</feature>
<feature type="region of interest" description="Leucine-zipper" evidence="1">
    <location>
        <begin position="569"/>
        <end position="576"/>
    </location>
</feature>
<feature type="coiled-coil region" evidence="2">
    <location>
        <begin position="94"/>
        <end position="137"/>
    </location>
</feature>
<feature type="coiled-coil region" evidence="2">
    <location>
        <begin position="228"/>
        <end position="258"/>
    </location>
</feature>
<feature type="coiled-coil region" evidence="2">
    <location>
        <begin position="330"/>
        <end position="407"/>
    </location>
</feature>
<feature type="compositionally biased region" description="Low complexity" evidence="3">
    <location>
        <begin position="44"/>
        <end position="75"/>
    </location>
</feature>
<feature type="compositionally biased region" description="Polar residues" evidence="3">
    <location>
        <begin position="76"/>
        <end position="88"/>
    </location>
</feature>
<feature type="compositionally biased region" description="Low complexity" evidence="3">
    <location>
        <begin position="128"/>
        <end position="140"/>
    </location>
</feature>
<feature type="compositionally biased region" description="Polar residues" evidence="3">
    <location>
        <begin position="141"/>
        <end position="157"/>
    </location>
</feature>
<feature type="compositionally biased region" description="Low complexity" evidence="3">
    <location>
        <begin position="158"/>
        <end position="198"/>
    </location>
</feature>
<feature type="compositionally biased region" description="Pro residues" evidence="3">
    <location>
        <begin position="484"/>
        <end position="505"/>
    </location>
</feature>
<feature type="compositionally biased region" description="Low complexity" evidence="3">
    <location>
        <begin position="506"/>
        <end position="516"/>
    </location>
</feature>
<sequence length="897" mass="104919">MDNFENPLLAPDQDVLLYLLDGYSQLQQLQKQQFNIHDDNINYNNNNNNNNNNNNNNNNNNNNNNNNNNNNNNNNIGSPQIMNENIETNSNDPQYLERLQSIQQQQHQCQTQIQQQLQNYQQQYEDQYQQRQQQYQDQYQKPYSSPPLNFNSIPPITNNNNNNNNNNNNNNNNNNSNSNSNSNSNSNSNSNSNSNSNSNNNNINNNICINNNDISIFLLNNQIQLQPLQQQQQQQQQQQQQQQQQQQQQQQQQQQQQQPTQPTQPTKPIQLTQPIQLTQPTLLEELKDISIQQQLLSAIQQTAQSPQQIHPLQQLQPYQLQSYQQIQASQQLQPYQQLIQLQQLQLQQLEEEKRQQQKQLLLQQQQLQEQQEKLQQQLLQQQKQQLKQKVKQQKQQHQKQQPQQQQQSIQIPPELQNYILNNNNNNNNNNTNKTLSPISEMIQNQFLNNQQTILNQNNSTLQLPTPFYSPQQQQQQHTPISSFIPPPSLPSSPPSPPSPPSPPPQQQQQQQQQQQQQQQQQQQQQQQQQQQQQQQLQQQQLQQQQLQQQHQLKESYESKESIKKYNQNIASRNYRLKKKDYIKEIENKIATLSLENNRLEKENGSIRTNGSIEMMRMEPESMKMLMDGKLIIENIKHALIIDDEKSLIYLLHQYHRTIDQRYSLLEKEVNKLINPYTQLRLCCIGYVPKSSPLVLNIFQGPESDKWLNLFKIEANITPEQSIKIDSLRFQYGKVSSRLSNELLELDLIIKRFFIKNVLPTPDTPLLNSDYYSEGELIPNTTTESIAPLNNFELLDFASKLESLKNKIILNASLGLDTFATLCSILTPKQEALLLVRVNLFCIDLHHHDILGEVWTNVNQISNSLSNPLTSFSDSMKKINFSFLQLDNNNNNYHYKIN</sequence>
<keyword id="KW-0175">Coiled coil</keyword>
<keyword id="KW-0238">DNA-binding</keyword>
<keyword id="KW-0539">Nucleus</keyword>
<keyword id="KW-1185">Reference proteome</keyword>
<keyword id="KW-0804">Transcription</keyword>
<keyword id="KW-0805">Transcription regulation</keyword>
<gene>
    <name type="primary">bzpR</name>
    <name type="ORF">DDB_G0290165</name>
</gene>
<proteinExistence type="inferred from homology"/>
<name>BZPR_DICDI</name>